<dbReference type="EMBL" id="AE017223">
    <property type="protein sequence ID" value="AAX75083.1"/>
    <property type="molecule type" value="Genomic_DNA"/>
</dbReference>
<dbReference type="RefSeq" id="WP_002966964.1">
    <property type="nucleotide sequence ID" value="NC_006932.1"/>
</dbReference>
<dbReference type="SMR" id="Q57BA1"/>
<dbReference type="EnsemblBacteria" id="AAX75083">
    <property type="protein sequence ID" value="AAX75083"/>
    <property type="gene ID" value="BruAb1_1765"/>
</dbReference>
<dbReference type="KEGG" id="bmb:BruAb1_1765"/>
<dbReference type="HOGENOM" id="CLU_027128_6_0_5"/>
<dbReference type="Proteomes" id="UP000000540">
    <property type="component" value="Chromosome I"/>
</dbReference>
<dbReference type="GO" id="GO:0006865">
    <property type="term" value="P:amino acid transport"/>
    <property type="evidence" value="ECO:0007669"/>
    <property type="project" value="UniProtKB-KW"/>
</dbReference>
<dbReference type="CDD" id="cd06342">
    <property type="entry name" value="PBP1_ABC_LIVBP-like"/>
    <property type="match status" value="1"/>
</dbReference>
<dbReference type="Gene3D" id="3.40.50.2300">
    <property type="match status" value="2"/>
</dbReference>
<dbReference type="InterPro" id="IPR028081">
    <property type="entry name" value="Leu-bd"/>
</dbReference>
<dbReference type="InterPro" id="IPR000709">
    <property type="entry name" value="Leu_Ile_Val-bd"/>
</dbReference>
<dbReference type="InterPro" id="IPR028082">
    <property type="entry name" value="Peripla_BP_I"/>
</dbReference>
<dbReference type="PANTHER" id="PTHR47151:SF2">
    <property type="entry name" value="AMINO ACID BINDING PROTEIN"/>
    <property type="match status" value="1"/>
</dbReference>
<dbReference type="PANTHER" id="PTHR47151">
    <property type="entry name" value="LEU/ILE/VAL-BINDING ABC TRANSPORTER SUBUNIT"/>
    <property type="match status" value="1"/>
</dbReference>
<dbReference type="Pfam" id="PF13458">
    <property type="entry name" value="Peripla_BP_6"/>
    <property type="match status" value="1"/>
</dbReference>
<dbReference type="PRINTS" id="PR00337">
    <property type="entry name" value="LEUILEVALBP"/>
</dbReference>
<dbReference type="SUPFAM" id="SSF53822">
    <property type="entry name" value="Periplasmic binding protein-like I"/>
    <property type="match status" value="1"/>
</dbReference>
<accession>Q57BA1</accession>
<name>LIVB2_BRUAB</name>
<evidence type="ECO:0000255" key="1"/>
<evidence type="ECO:0000305" key="2"/>
<reference key="1">
    <citation type="journal article" date="2005" name="J. Bacteriol.">
        <title>Completion of the genome sequence of Brucella abortus and comparison to the highly similar genomes of Brucella melitensis and Brucella suis.</title>
        <authorList>
            <person name="Halling S.M."/>
            <person name="Peterson-Burch B.D."/>
            <person name="Bricker B.J."/>
            <person name="Zuerner R.L."/>
            <person name="Qing Z."/>
            <person name="Li L.-L."/>
            <person name="Kapur V."/>
            <person name="Alt D.P."/>
            <person name="Olsen S.C."/>
        </authorList>
    </citation>
    <scope>NUCLEOTIDE SEQUENCE [LARGE SCALE GENOMIC DNA]</scope>
    <source>
        <strain>9-941</strain>
    </source>
</reference>
<comment type="function">
    <text evidence="2">Component of an amino-acid transport system.</text>
</comment>
<comment type="similarity">
    <text evidence="2">Belongs to the leucine-binding protein family.</text>
</comment>
<keyword id="KW-0029">Amino-acid transport</keyword>
<keyword id="KW-0732">Signal</keyword>
<keyword id="KW-0813">Transport</keyword>
<protein>
    <recommendedName>
        <fullName>Leu/Ile/Val-binding protein homolog 2</fullName>
    </recommendedName>
</protein>
<organism>
    <name type="scientific">Brucella abortus biovar 1 (strain 9-941)</name>
    <dbReference type="NCBI Taxonomy" id="262698"/>
    <lineage>
        <taxon>Bacteria</taxon>
        <taxon>Pseudomonadati</taxon>
        <taxon>Pseudomonadota</taxon>
        <taxon>Alphaproteobacteria</taxon>
        <taxon>Hyphomicrobiales</taxon>
        <taxon>Brucellaceae</taxon>
        <taxon>Brucella/Ochrobactrum group</taxon>
        <taxon>Brucella</taxon>
    </lineage>
</organism>
<gene>
    <name type="ordered locus">BruAb1_1765</name>
</gene>
<feature type="signal peptide" evidence="1">
    <location>
        <begin position="1"/>
        <end position="23"/>
    </location>
</feature>
<feature type="chain" id="PRO_0000285731" description="Leu/Ile/Val-binding protein homolog 2">
    <location>
        <begin position="24"/>
        <end position="371"/>
    </location>
</feature>
<sequence>MKKSLFCGVCLCALVAMGGTSFADIMVGVGAPLTGSQAAFGEQIKRGVEAAVAEANAKGGMNGEQITLVYGDDAADPKQGISVANKFVGDGVKFVIGHFNSGVSIPTSDIYAENGVLMIAPGTTNPTFTERELWNTFRTCRRDDKQGIVPGKYMADNYKDGKVAILHDKTPYGQGLADETKKKLNELGTKETLYEGVNVGEKDFSALIAKLKQAGVNVVYWGGLHPEAGLIIRQMADQGLKAQFISGDGIVSNELASIAGPAVEGTLNTFGPDPRNNPDNAELVKKFRDAGFEPEAYTFYAYAGVQSLVNAANAAGSNDPMEVATAMKEKGPFKTVLGDISFDAKGDPSLSPYVMFEWRKGEDGKYNYFQK</sequence>
<proteinExistence type="inferred from homology"/>